<name>MNMA_BRUSI</name>
<gene>
    <name evidence="1" type="primary">mnmA</name>
    <name type="synonym">trmU</name>
    <name type="ordered locus">BSUIS_A1646</name>
</gene>
<feature type="chain" id="PRO_1000076559" description="tRNA-specific 2-thiouridylase MnmA">
    <location>
        <begin position="1"/>
        <end position="398"/>
    </location>
</feature>
<feature type="region of interest" description="Interaction with tRNA" evidence="1">
    <location>
        <begin position="160"/>
        <end position="162"/>
    </location>
</feature>
<feature type="active site" description="Nucleophile" evidence="1">
    <location>
        <position position="114"/>
    </location>
</feature>
<feature type="active site" description="Cysteine persulfide intermediate" evidence="1">
    <location>
        <position position="210"/>
    </location>
</feature>
<feature type="binding site" evidence="1">
    <location>
        <begin position="20"/>
        <end position="27"/>
    </location>
    <ligand>
        <name>ATP</name>
        <dbReference type="ChEBI" id="CHEBI:30616"/>
    </ligand>
</feature>
<feature type="binding site" evidence="1">
    <location>
        <position position="46"/>
    </location>
    <ligand>
        <name>ATP</name>
        <dbReference type="ChEBI" id="CHEBI:30616"/>
    </ligand>
</feature>
<feature type="binding site" evidence="1">
    <location>
        <position position="138"/>
    </location>
    <ligand>
        <name>ATP</name>
        <dbReference type="ChEBI" id="CHEBI:30616"/>
    </ligand>
</feature>
<feature type="site" description="Interaction with tRNA" evidence="1">
    <location>
        <position position="139"/>
    </location>
</feature>
<feature type="site" description="Interaction with tRNA" evidence="1">
    <location>
        <position position="352"/>
    </location>
</feature>
<feature type="disulfide bond" description="Alternate" evidence="1">
    <location>
        <begin position="114"/>
        <end position="210"/>
    </location>
</feature>
<sequence>MSLNSLDLPGKPEDTRVVVAMSGGVDSSVVAGILKREGYDVVGVTLQLYDHSAAVHRAGSCCAGQDIEDARRVSESLGIPHYVLDYEARFREAVIDPFANSYVSGETPIPCVSCNQTVKFADLLQTARDLGADALATGHYIRSRANGAHRALYRPVDTDRDQSYFLFATTQEQIDYLRFPLGHLPKAQVREIAEELGLTVAKKQDSQDICFVPQGKYSDIISRLKPEAANPGDIVHIDGRTLGRHDGIVHYTVGQRRGIGVATGEALYVVHLDAANARVIVGPREALETHKVFLRDVNWLGDTPIADLPKSGMEVFAKVRSTRPPRPAVLRHADGQTWVELVDGESGIAPGQACVLYSDDSNAARVFGGGFIGRSEREPQAEEMLRRLMANADKASAA</sequence>
<protein>
    <recommendedName>
        <fullName evidence="1">tRNA-specific 2-thiouridylase MnmA</fullName>
        <ecNumber evidence="1">2.8.1.13</ecNumber>
    </recommendedName>
</protein>
<evidence type="ECO:0000255" key="1">
    <source>
        <dbReference type="HAMAP-Rule" id="MF_00144"/>
    </source>
</evidence>
<proteinExistence type="inferred from homology"/>
<accession>B0CI68</accession>
<comment type="function">
    <text evidence="1">Catalyzes the 2-thiolation of uridine at the wobble position (U34) of tRNA, leading to the formation of s(2)U34.</text>
</comment>
<comment type="catalytic activity">
    <reaction evidence="1">
        <text>S-sulfanyl-L-cysteinyl-[protein] + uridine(34) in tRNA + AH2 + ATP = 2-thiouridine(34) in tRNA + L-cysteinyl-[protein] + A + AMP + diphosphate + H(+)</text>
        <dbReference type="Rhea" id="RHEA:47032"/>
        <dbReference type="Rhea" id="RHEA-COMP:10131"/>
        <dbReference type="Rhea" id="RHEA-COMP:11726"/>
        <dbReference type="Rhea" id="RHEA-COMP:11727"/>
        <dbReference type="Rhea" id="RHEA-COMP:11728"/>
        <dbReference type="ChEBI" id="CHEBI:13193"/>
        <dbReference type="ChEBI" id="CHEBI:15378"/>
        <dbReference type="ChEBI" id="CHEBI:17499"/>
        <dbReference type="ChEBI" id="CHEBI:29950"/>
        <dbReference type="ChEBI" id="CHEBI:30616"/>
        <dbReference type="ChEBI" id="CHEBI:33019"/>
        <dbReference type="ChEBI" id="CHEBI:61963"/>
        <dbReference type="ChEBI" id="CHEBI:65315"/>
        <dbReference type="ChEBI" id="CHEBI:87170"/>
        <dbReference type="ChEBI" id="CHEBI:456215"/>
        <dbReference type="EC" id="2.8.1.13"/>
    </reaction>
</comment>
<comment type="subcellular location">
    <subcellularLocation>
        <location evidence="1">Cytoplasm</location>
    </subcellularLocation>
</comment>
<comment type="similarity">
    <text evidence="1">Belongs to the MnmA/TRMU family.</text>
</comment>
<organism>
    <name type="scientific">Brucella suis (strain ATCC 23445 / NCTC 10510)</name>
    <dbReference type="NCBI Taxonomy" id="470137"/>
    <lineage>
        <taxon>Bacteria</taxon>
        <taxon>Pseudomonadati</taxon>
        <taxon>Pseudomonadota</taxon>
        <taxon>Alphaproteobacteria</taxon>
        <taxon>Hyphomicrobiales</taxon>
        <taxon>Brucellaceae</taxon>
        <taxon>Brucella/Ochrobactrum group</taxon>
        <taxon>Brucella</taxon>
    </lineage>
</organism>
<reference key="1">
    <citation type="submission" date="2007-12" db="EMBL/GenBank/DDBJ databases">
        <title>Brucella suis ATCC 23445 whole genome shotgun sequencing project.</title>
        <authorList>
            <person name="Setubal J.C."/>
            <person name="Bowns C."/>
            <person name="Boyle S."/>
            <person name="Crasta O.R."/>
            <person name="Czar M.J."/>
            <person name="Dharmanolla C."/>
            <person name="Gillespie J.J."/>
            <person name="Kenyon R.W."/>
            <person name="Lu J."/>
            <person name="Mane S."/>
            <person name="Mohapatra S."/>
            <person name="Nagrani S."/>
            <person name="Purkayastha A."/>
            <person name="Rajasimha H.K."/>
            <person name="Shallom J.M."/>
            <person name="Shallom S."/>
            <person name="Shukla M."/>
            <person name="Snyder E.E."/>
            <person name="Sobral B.W."/>
            <person name="Wattam A.R."/>
            <person name="Will R."/>
            <person name="Williams K."/>
            <person name="Yoo H."/>
            <person name="Bruce D."/>
            <person name="Detter C."/>
            <person name="Munk C."/>
            <person name="Brettin T.S."/>
        </authorList>
    </citation>
    <scope>NUCLEOTIDE SEQUENCE [LARGE SCALE GENOMIC DNA]</scope>
    <source>
        <strain>ATCC 23445 / NCTC 10510</strain>
    </source>
</reference>
<dbReference type="EC" id="2.8.1.13" evidence="1"/>
<dbReference type="EMBL" id="CP000911">
    <property type="protein sequence ID" value="ABY38674.1"/>
    <property type="molecule type" value="Genomic_DNA"/>
</dbReference>
<dbReference type="SMR" id="B0CI68"/>
<dbReference type="KEGG" id="bmt:BSUIS_A1646"/>
<dbReference type="HOGENOM" id="CLU_035188_0_1_5"/>
<dbReference type="Proteomes" id="UP000008545">
    <property type="component" value="Chromosome I"/>
</dbReference>
<dbReference type="GO" id="GO:0005737">
    <property type="term" value="C:cytoplasm"/>
    <property type="evidence" value="ECO:0007669"/>
    <property type="project" value="UniProtKB-SubCell"/>
</dbReference>
<dbReference type="GO" id="GO:0005524">
    <property type="term" value="F:ATP binding"/>
    <property type="evidence" value="ECO:0007669"/>
    <property type="project" value="UniProtKB-KW"/>
</dbReference>
<dbReference type="GO" id="GO:0000049">
    <property type="term" value="F:tRNA binding"/>
    <property type="evidence" value="ECO:0007669"/>
    <property type="project" value="UniProtKB-KW"/>
</dbReference>
<dbReference type="GO" id="GO:0103016">
    <property type="term" value="F:tRNA-uridine 2-sulfurtransferase activity"/>
    <property type="evidence" value="ECO:0007669"/>
    <property type="project" value="UniProtKB-EC"/>
</dbReference>
<dbReference type="GO" id="GO:0002143">
    <property type="term" value="P:tRNA wobble position uridine thiolation"/>
    <property type="evidence" value="ECO:0007669"/>
    <property type="project" value="TreeGrafter"/>
</dbReference>
<dbReference type="CDD" id="cd01998">
    <property type="entry name" value="MnmA_TRMU-like"/>
    <property type="match status" value="1"/>
</dbReference>
<dbReference type="FunFam" id="2.30.30.280:FF:000001">
    <property type="entry name" value="tRNA-specific 2-thiouridylase MnmA"/>
    <property type="match status" value="1"/>
</dbReference>
<dbReference type="FunFam" id="3.40.50.620:FF:000115">
    <property type="entry name" value="tRNA-specific 2-thiouridylase MnmA"/>
    <property type="match status" value="1"/>
</dbReference>
<dbReference type="Gene3D" id="2.30.30.280">
    <property type="entry name" value="Adenine nucleotide alpha hydrolases-like domains"/>
    <property type="match status" value="1"/>
</dbReference>
<dbReference type="Gene3D" id="3.40.50.620">
    <property type="entry name" value="HUPs"/>
    <property type="match status" value="1"/>
</dbReference>
<dbReference type="Gene3D" id="2.40.30.10">
    <property type="entry name" value="Translation factors"/>
    <property type="match status" value="1"/>
</dbReference>
<dbReference type="HAMAP" id="MF_00144">
    <property type="entry name" value="tRNA_thiouridyl_MnmA"/>
    <property type="match status" value="1"/>
</dbReference>
<dbReference type="InterPro" id="IPR004506">
    <property type="entry name" value="MnmA-like"/>
</dbReference>
<dbReference type="InterPro" id="IPR046885">
    <property type="entry name" value="MnmA-like_C"/>
</dbReference>
<dbReference type="InterPro" id="IPR046884">
    <property type="entry name" value="MnmA-like_central"/>
</dbReference>
<dbReference type="InterPro" id="IPR023382">
    <property type="entry name" value="MnmA-like_central_sf"/>
</dbReference>
<dbReference type="InterPro" id="IPR014729">
    <property type="entry name" value="Rossmann-like_a/b/a_fold"/>
</dbReference>
<dbReference type="NCBIfam" id="NF001138">
    <property type="entry name" value="PRK00143.1"/>
    <property type="match status" value="1"/>
</dbReference>
<dbReference type="NCBIfam" id="TIGR00420">
    <property type="entry name" value="trmU"/>
    <property type="match status" value="1"/>
</dbReference>
<dbReference type="PANTHER" id="PTHR11933:SF5">
    <property type="entry name" value="MITOCHONDRIAL TRNA-SPECIFIC 2-THIOURIDYLASE 1"/>
    <property type="match status" value="1"/>
</dbReference>
<dbReference type="PANTHER" id="PTHR11933">
    <property type="entry name" value="TRNA 5-METHYLAMINOMETHYL-2-THIOURIDYLATE -METHYLTRANSFERASE"/>
    <property type="match status" value="1"/>
</dbReference>
<dbReference type="Pfam" id="PF03054">
    <property type="entry name" value="tRNA_Me_trans"/>
    <property type="match status" value="1"/>
</dbReference>
<dbReference type="Pfam" id="PF20258">
    <property type="entry name" value="tRNA_Me_trans_C"/>
    <property type="match status" value="1"/>
</dbReference>
<dbReference type="Pfam" id="PF20259">
    <property type="entry name" value="tRNA_Me_trans_M"/>
    <property type="match status" value="1"/>
</dbReference>
<dbReference type="SUPFAM" id="SSF52402">
    <property type="entry name" value="Adenine nucleotide alpha hydrolases-like"/>
    <property type="match status" value="1"/>
</dbReference>
<keyword id="KW-0067">ATP-binding</keyword>
<keyword id="KW-0963">Cytoplasm</keyword>
<keyword id="KW-1015">Disulfide bond</keyword>
<keyword id="KW-0547">Nucleotide-binding</keyword>
<keyword id="KW-0694">RNA-binding</keyword>
<keyword id="KW-0808">Transferase</keyword>
<keyword id="KW-0819">tRNA processing</keyword>
<keyword id="KW-0820">tRNA-binding</keyword>